<gene>
    <name type="primary">EIF4A1</name>
</gene>
<accession>Q5R5F5</accession>
<protein>
    <recommendedName>
        <fullName>Eukaryotic initiation factor 4A-I</fullName>
        <shortName>eIF-4A-I</shortName>
        <shortName>eIF4A-I</shortName>
        <ecNumber>3.6.4.13</ecNumber>
    </recommendedName>
    <alternativeName>
        <fullName>ATP-dependent RNA helicase eIF4A-1</fullName>
    </alternativeName>
</protein>
<evidence type="ECO:0000250" key="1"/>
<evidence type="ECO:0000250" key="2">
    <source>
        <dbReference type="UniProtKB" id="P60842"/>
    </source>
</evidence>
<evidence type="ECO:0000250" key="3">
    <source>
        <dbReference type="UniProtKB" id="P60843"/>
    </source>
</evidence>
<evidence type="ECO:0000255" key="4">
    <source>
        <dbReference type="PROSITE-ProRule" id="PRU00541"/>
    </source>
</evidence>
<evidence type="ECO:0000255" key="5">
    <source>
        <dbReference type="PROSITE-ProRule" id="PRU00542"/>
    </source>
</evidence>
<evidence type="ECO:0000256" key="6">
    <source>
        <dbReference type="SAM" id="MobiDB-lite"/>
    </source>
</evidence>
<evidence type="ECO:0000305" key="7"/>
<organism>
    <name type="scientific">Pongo abelii</name>
    <name type="common">Sumatran orangutan</name>
    <name type="synonym">Pongo pygmaeus abelii</name>
    <dbReference type="NCBI Taxonomy" id="9601"/>
    <lineage>
        <taxon>Eukaryota</taxon>
        <taxon>Metazoa</taxon>
        <taxon>Chordata</taxon>
        <taxon>Craniata</taxon>
        <taxon>Vertebrata</taxon>
        <taxon>Euteleostomi</taxon>
        <taxon>Mammalia</taxon>
        <taxon>Eutheria</taxon>
        <taxon>Euarchontoglires</taxon>
        <taxon>Primates</taxon>
        <taxon>Haplorrhini</taxon>
        <taxon>Catarrhini</taxon>
        <taxon>Hominidae</taxon>
        <taxon>Pongo</taxon>
    </lineage>
</organism>
<comment type="function">
    <text evidence="1 2">ATP-dependent RNA helicase which is a subunit of the eIF4F complex involved in cap recognition and is required for mRNA binding to ribosome. In the current model of translation initiation, eIF4A unwinds RNA secondary structures in the 5'-UTR of mRNAs which is necessary to allow efficient binding of the small ribosomal subunit, and subsequent scanning for the initiator codon (By similarity). As a result, promotes cell proliferation and growth (By similarity).</text>
</comment>
<comment type="catalytic activity">
    <reaction>
        <text>ATP + H2O = ADP + phosphate + H(+)</text>
        <dbReference type="Rhea" id="RHEA:13065"/>
        <dbReference type="ChEBI" id="CHEBI:15377"/>
        <dbReference type="ChEBI" id="CHEBI:15378"/>
        <dbReference type="ChEBI" id="CHEBI:30616"/>
        <dbReference type="ChEBI" id="CHEBI:43474"/>
        <dbReference type="ChEBI" id="CHEBI:456216"/>
        <dbReference type="EC" id="3.6.4.13"/>
    </reaction>
</comment>
<comment type="subunit">
    <text evidence="1 2">eIF4F is a multi-subunit complex, the composition of which varies with external and internal environmental conditions. It is composed of at least EIF4A, EIF4E and EIF4G1/EIF4G3. Interacts with PAIP1, EIF4E and UPF2. Found in a complex with XPO7, EIF4A1, ARHGAP1, VPS26A, VPS29, VPS35 and SFN. May interact with NOM1. Interacts with PDCD4; this interferes with the interaction between EIF4A and EIF4G. Interacts with RBM4 (By similarity). Interacts with DDX3X in an RNA-independent manner (By similarity). Interacts with PKP1 (via N-terminus); the interaction promotes EIF4A1 recruitment to the cap-dependent translation complex and EIF4A1 ATPase activity (By similarity).</text>
</comment>
<comment type="subcellular location">
    <subcellularLocation>
        <location evidence="2">Cytoplasm</location>
        <location evidence="2">Perinuclear region</location>
    </subcellularLocation>
    <subcellularLocation>
        <location evidence="2">Cell membrane</location>
    </subcellularLocation>
    <subcellularLocation>
        <location evidence="2">Cytoplasm</location>
        <location evidence="2">Stress granule</location>
    </subcellularLocation>
    <text evidence="2">Colocalizes with PKP1 in stress granules following arsenate or hydrogen peroxide treatment.</text>
</comment>
<comment type="similarity">
    <text evidence="7">Belongs to the DEAD box helicase family. eIF4A subfamily.</text>
</comment>
<feature type="initiator methionine" description="Removed" evidence="2">
    <location>
        <position position="1"/>
    </location>
</feature>
<feature type="chain" id="PRO_0000054936" description="Eukaryotic initiation factor 4A-I">
    <location>
        <begin position="2"/>
        <end position="406"/>
    </location>
</feature>
<feature type="domain" description="Helicase ATP-binding" evidence="4">
    <location>
        <begin position="63"/>
        <end position="234"/>
    </location>
</feature>
<feature type="domain" description="Helicase C-terminal" evidence="5">
    <location>
        <begin position="245"/>
        <end position="406"/>
    </location>
</feature>
<feature type="region of interest" description="Disordered" evidence="6">
    <location>
        <begin position="1"/>
        <end position="21"/>
    </location>
</feature>
<feature type="short sequence motif" description="Q motif">
    <location>
        <begin position="32"/>
        <end position="60"/>
    </location>
</feature>
<feature type="short sequence motif" description="DEAD box">
    <location>
        <begin position="182"/>
        <end position="185"/>
    </location>
</feature>
<feature type="binding site" evidence="4">
    <location>
        <begin position="76"/>
        <end position="83"/>
    </location>
    <ligand>
        <name>ATP</name>
        <dbReference type="ChEBI" id="CHEBI:30616"/>
    </ligand>
</feature>
<feature type="modified residue" description="N-acetylserine" evidence="2">
    <location>
        <position position="2"/>
    </location>
</feature>
<feature type="modified residue" description="Phosphoserine" evidence="2">
    <location>
        <position position="4"/>
    </location>
</feature>
<feature type="modified residue" description="N6-acetyllysine" evidence="2">
    <location>
        <position position="118"/>
    </location>
</feature>
<feature type="modified residue" description="Phosphothreonine" evidence="2">
    <location>
        <position position="158"/>
    </location>
</feature>
<feature type="modified residue" description="N6-acetyllysine" evidence="2">
    <location>
        <position position="174"/>
    </location>
</feature>
<feature type="modified residue" description="N6-acetyllysine" evidence="3">
    <location>
        <position position="193"/>
    </location>
</feature>
<feature type="modified residue" description="N6-acetyllysine; alternate" evidence="3">
    <location>
        <position position="238"/>
    </location>
</feature>
<feature type="cross-link" description="Glycyl lysine isopeptide (Lys-Gly) (interchain with G-Cter in SUMO2)" evidence="2">
    <location>
        <position position="146"/>
    </location>
</feature>
<feature type="cross-link" description="Glycyl lysine isopeptide (Lys-Gly) (interchain with G-Cter in SUMO2)" evidence="2">
    <location>
        <position position="225"/>
    </location>
</feature>
<feature type="cross-link" description="Glycyl lysine isopeptide (Lys-Gly) (interchain with G-Cter in SUMO2); alternate" evidence="2">
    <location>
        <position position="238"/>
    </location>
</feature>
<feature type="cross-link" description="Glycyl lysine isopeptide (Lys-Gly) (interchain with G-Cter in SUMO2)" evidence="2">
    <location>
        <position position="309"/>
    </location>
</feature>
<feature type="cross-link" description="Glycyl lysine isopeptide (Lys-Gly) (interchain with G-Cter in SUMO2)" evidence="2">
    <location>
        <position position="369"/>
    </location>
</feature>
<feature type="cross-link" description="Glycyl lysine isopeptide (Lys-Gly) (interchain with G-Cter in SUMO2)" evidence="2">
    <location>
        <position position="381"/>
    </location>
</feature>
<sequence>MSASQDSRSRDNGPDGMEPEGVIESNWNEIVDSLDDMNLSESLLRGIYAYGFEKPSAIQQRAILSCIKGYDVIAQAQSGTGKTATFAISILQQIELDLKATQALVLAPTRELAQQIQKVVMALGDYMGASCHACIGGTNVRAEVQKLQMEAPHIIVGTPGRVFDMLNRRYLSPKYIKMFVLDEADEMLSRGFKDQIYDIFQKLNSNTQVVLLSATMPSDVLEVTKKFMRDPIRILVKKEELTLEGIRQFYINVEREEWKLDTLCDLYETLTITQAVIFINTRRKVDWLTEKMHARDFTVSAMHGDMDQKERDVIMREFRSGSSRVLITTDLLARGIDVQQVSLVINYDLPTNRENYIHRIGRGGRFGRKGVAINMVTEEDKRTLRDIETFYNTSIEEMPLNVADLI</sequence>
<name>IF4A1_PONAB</name>
<keyword id="KW-0007">Acetylation</keyword>
<keyword id="KW-0067">ATP-binding</keyword>
<keyword id="KW-1003">Cell membrane</keyword>
<keyword id="KW-0963">Cytoplasm</keyword>
<keyword id="KW-0347">Helicase</keyword>
<keyword id="KW-0378">Hydrolase</keyword>
<keyword id="KW-0396">Initiation factor</keyword>
<keyword id="KW-1017">Isopeptide bond</keyword>
<keyword id="KW-0472">Membrane</keyword>
<keyword id="KW-0547">Nucleotide-binding</keyword>
<keyword id="KW-0597">Phosphoprotein</keyword>
<keyword id="KW-0648">Protein biosynthesis</keyword>
<keyword id="KW-1185">Reference proteome</keyword>
<keyword id="KW-0694">RNA-binding</keyword>
<keyword id="KW-0832">Ubl conjugation</keyword>
<dbReference type="EC" id="3.6.4.13"/>
<dbReference type="EMBL" id="CR860906">
    <property type="protein sequence ID" value="CAH93011.1"/>
    <property type="molecule type" value="mRNA"/>
</dbReference>
<dbReference type="RefSeq" id="NP_001126779.1">
    <property type="nucleotide sequence ID" value="NM_001133307.1"/>
</dbReference>
<dbReference type="SMR" id="Q5R5F5"/>
<dbReference type="STRING" id="9601.ENSPPYP00000008913"/>
<dbReference type="GeneID" id="100173783"/>
<dbReference type="KEGG" id="pon:100173783"/>
<dbReference type="CTD" id="1973"/>
<dbReference type="eggNOG" id="KOG0327">
    <property type="taxonomic scope" value="Eukaryota"/>
</dbReference>
<dbReference type="InParanoid" id="Q5R5F5"/>
<dbReference type="OrthoDB" id="10265785at2759"/>
<dbReference type="Proteomes" id="UP000001595">
    <property type="component" value="Unplaced"/>
</dbReference>
<dbReference type="GO" id="GO:0010494">
    <property type="term" value="C:cytoplasmic stress granule"/>
    <property type="evidence" value="ECO:0007669"/>
    <property type="project" value="UniProtKB-SubCell"/>
</dbReference>
<dbReference type="GO" id="GO:0097165">
    <property type="term" value="C:nuclear stress granule"/>
    <property type="evidence" value="ECO:0000250"/>
    <property type="project" value="UniProtKB"/>
</dbReference>
<dbReference type="GO" id="GO:0048471">
    <property type="term" value="C:perinuclear region of cytoplasm"/>
    <property type="evidence" value="ECO:0000250"/>
    <property type="project" value="UniProtKB"/>
</dbReference>
<dbReference type="GO" id="GO:0005886">
    <property type="term" value="C:plasma membrane"/>
    <property type="evidence" value="ECO:0000250"/>
    <property type="project" value="UniProtKB"/>
</dbReference>
<dbReference type="GO" id="GO:0005524">
    <property type="term" value="F:ATP binding"/>
    <property type="evidence" value="ECO:0007669"/>
    <property type="project" value="UniProtKB-KW"/>
</dbReference>
<dbReference type="GO" id="GO:0016887">
    <property type="term" value="F:ATP hydrolysis activity"/>
    <property type="evidence" value="ECO:0007669"/>
    <property type="project" value="RHEA"/>
</dbReference>
<dbReference type="GO" id="GO:0003723">
    <property type="term" value="F:RNA binding"/>
    <property type="evidence" value="ECO:0007669"/>
    <property type="project" value="UniProtKB-KW"/>
</dbReference>
<dbReference type="GO" id="GO:0003724">
    <property type="term" value="F:RNA helicase activity"/>
    <property type="evidence" value="ECO:0007669"/>
    <property type="project" value="UniProtKB-EC"/>
</dbReference>
<dbReference type="GO" id="GO:0003743">
    <property type="term" value="F:translation initiation factor activity"/>
    <property type="evidence" value="ECO:0007669"/>
    <property type="project" value="UniProtKB-KW"/>
</dbReference>
<dbReference type="GO" id="GO:0045944">
    <property type="term" value="P:positive regulation of transcription by RNA polymerase II"/>
    <property type="evidence" value="ECO:0000250"/>
    <property type="project" value="UniProtKB"/>
</dbReference>
<dbReference type="CDD" id="cd18046">
    <property type="entry name" value="DEADc_EIF4AII_EIF4AI_DDX2"/>
    <property type="match status" value="1"/>
</dbReference>
<dbReference type="CDD" id="cd18787">
    <property type="entry name" value="SF2_C_DEAD"/>
    <property type="match status" value="1"/>
</dbReference>
<dbReference type="FunFam" id="3.40.50.300:FF:000089">
    <property type="entry name" value="Eukaryotic initiation factor 4A-II"/>
    <property type="match status" value="1"/>
</dbReference>
<dbReference type="FunFam" id="3.40.50.300:FF:000031">
    <property type="entry name" value="Eukaryotic initiation factor 4A-III"/>
    <property type="match status" value="1"/>
</dbReference>
<dbReference type="Gene3D" id="3.40.50.300">
    <property type="entry name" value="P-loop containing nucleotide triphosphate hydrolases"/>
    <property type="match status" value="2"/>
</dbReference>
<dbReference type="InterPro" id="IPR011545">
    <property type="entry name" value="DEAD/DEAH_box_helicase_dom"/>
</dbReference>
<dbReference type="InterPro" id="IPR044728">
    <property type="entry name" value="EIF4A_DEADc"/>
</dbReference>
<dbReference type="InterPro" id="IPR014001">
    <property type="entry name" value="Helicase_ATP-bd"/>
</dbReference>
<dbReference type="InterPro" id="IPR001650">
    <property type="entry name" value="Helicase_C-like"/>
</dbReference>
<dbReference type="InterPro" id="IPR027417">
    <property type="entry name" value="P-loop_NTPase"/>
</dbReference>
<dbReference type="InterPro" id="IPR000629">
    <property type="entry name" value="RNA-helicase_DEAD-box_CS"/>
</dbReference>
<dbReference type="InterPro" id="IPR014014">
    <property type="entry name" value="RNA_helicase_DEAD_Q_motif"/>
</dbReference>
<dbReference type="PANTHER" id="PTHR47958">
    <property type="entry name" value="ATP-DEPENDENT RNA HELICASE DBP3"/>
    <property type="match status" value="1"/>
</dbReference>
<dbReference type="Pfam" id="PF00270">
    <property type="entry name" value="DEAD"/>
    <property type="match status" value="1"/>
</dbReference>
<dbReference type="Pfam" id="PF00271">
    <property type="entry name" value="Helicase_C"/>
    <property type="match status" value="1"/>
</dbReference>
<dbReference type="SMART" id="SM00487">
    <property type="entry name" value="DEXDc"/>
    <property type="match status" value="1"/>
</dbReference>
<dbReference type="SMART" id="SM00490">
    <property type="entry name" value="HELICc"/>
    <property type="match status" value="1"/>
</dbReference>
<dbReference type="SUPFAM" id="SSF52540">
    <property type="entry name" value="P-loop containing nucleoside triphosphate hydrolases"/>
    <property type="match status" value="1"/>
</dbReference>
<dbReference type="PROSITE" id="PS00039">
    <property type="entry name" value="DEAD_ATP_HELICASE"/>
    <property type="match status" value="1"/>
</dbReference>
<dbReference type="PROSITE" id="PS51192">
    <property type="entry name" value="HELICASE_ATP_BIND_1"/>
    <property type="match status" value="1"/>
</dbReference>
<dbReference type="PROSITE" id="PS51194">
    <property type="entry name" value="HELICASE_CTER"/>
    <property type="match status" value="1"/>
</dbReference>
<dbReference type="PROSITE" id="PS51195">
    <property type="entry name" value="Q_MOTIF"/>
    <property type="match status" value="1"/>
</dbReference>
<reference key="1">
    <citation type="submission" date="2004-11" db="EMBL/GenBank/DDBJ databases">
        <authorList>
            <consortium name="The German cDNA consortium"/>
        </authorList>
    </citation>
    <scope>NUCLEOTIDE SEQUENCE [LARGE SCALE MRNA]</scope>
    <source>
        <tissue>Liver</tissue>
    </source>
</reference>
<proteinExistence type="evidence at transcript level"/>